<keyword id="KW-1185">Reference proteome</keyword>
<keyword id="KW-0677">Repeat</keyword>
<feature type="chain" id="PRO_0000202584" description="Uncharacterized protein YCR101C">
    <location>
        <begin position="1"/>
        <end position="182"/>
    </location>
</feature>
<feature type="repeat" description="BNR 1">
    <location>
        <begin position="58"/>
        <end position="69"/>
    </location>
</feature>
<feature type="repeat" description="BNR 2">
    <location>
        <begin position="102"/>
        <end position="113"/>
    </location>
</feature>
<gene>
    <name type="ordered locus">YCR101C</name>
</gene>
<organism>
    <name type="scientific">Saccharomyces cerevisiae (strain ATCC 204508 / S288c)</name>
    <name type="common">Baker's yeast</name>
    <dbReference type="NCBI Taxonomy" id="559292"/>
    <lineage>
        <taxon>Eukaryota</taxon>
        <taxon>Fungi</taxon>
        <taxon>Dikarya</taxon>
        <taxon>Ascomycota</taxon>
        <taxon>Saccharomycotina</taxon>
        <taxon>Saccharomycetes</taxon>
        <taxon>Saccharomycetales</taxon>
        <taxon>Saccharomycetaceae</taxon>
        <taxon>Saccharomyces</taxon>
    </lineage>
</organism>
<sequence>MILLHAIYTLWVIILLPLLNAEKFVPKVTEAPIETSFNLVSFDDSNTSIRLDGWGVVWISFDAGENWETVKEIEERIFRFTVDPFHGQERGFAFICESPKFYITDDRGESWRALTIPSSEEYLDGDCFITTHPRNKELLIANCYSYMIDADVLYDPSEIYLSNDGNPFLKLNLPWKRKKTTI</sequence>
<protein>
    <recommendedName>
        <fullName>Uncharacterized protein YCR101C</fullName>
    </recommendedName>
</protein>
<reference key="1">
    <citation type="journal article" date="1992" name="Nature">
        <title>The complete DNA sequence of yeast chromosome III.</title>
        <authorList>
            <person name="Oliver S.G."/>
            <person name="van der Aart Q.J.M."/>
            <person name="Agostoni-Carbone M.L."/>
            <person name="Aigle M."/>
            <person name="Alberghina L."/>
            <person name="Alexandraki D."/>
            <person name="Antoine G."/>
            <person name="Anwar R."/>
            <person name="Ballesta J.P.G."/>
            <person name="Benit P."/>
            <person name="Berben G."/>
            <person name="Bergantino E."/>
            <person name="Biteau N."/>
            <person name="Bolle P.-A."/>
            <person name="Bolotin-Fukuhara M."/>
            <person name="Brown A."/>
            <person name="Brown A.J.P."/>
            <person name="Buhler J.-M."/>
            <person name="Carcano C."/>
            <person name="Carignani G."/>
            <person name="Cederberg H."/>
            <person name="Chanet R."/>
            <person name="Contreras R."/>
            <person name="Crouzet M."/>
            <person name="Daignan-Fornier B."/>
            <person name="Defoor E."/>
            <person name="Delgado M.D."/>
            <person name="Demolder J."/>
            <person name="Doira C."/>
            <person name="Dubois E."/>
            <person name="Dujon B."/>
            <person name="Duesterhoeft A."/>
            <person name="Erdmann D."/>
            <person name="Esteban M."/>
            <person name="Fabre F."/>
            <person name="Fairhead C."/>
            <person name="Faye G."/>
            <person name="Feldmann H."/>
            <person name="Fiers W."/>
            <person name="Francingues-Gaillard M.-C."/>
            <person name="Franco L."/>
            <person name="Frontali L."/>
            <person name="Fukuhara H."/>
            <person name="Fuller L.J."/>
            <person name="Galland P."/>
            <person name="Gent M.E."/>
            <person name="Gigot D."/>
            <person name="Gilliquet V."/>
            <person name="Glansdorff N."/>
            <person name="Goffeau A."/>
            <person name="Grenson M."/>
            <person name="Grisanti P."/>
            <person name="Grivell L.A."/>
            <person name="de Haan M."/>
            <person name="Haasemann M."/>
            <person name="Hatat D."/>
            <person name="Hoenicka J."/>
            <person name="Hegemann J.H."/>
            <person name="Herbert C.J."/>
            <person name="Hilger F."/>
            <person name="Hohmann S."/>
            <person name="Hollenberg C.P."/>
            <person name="Huse K."/>
            <person name="Iborra F."/>
            <person name="Indge K.J."/>
            <person name="Isono K."/>
            <person name="Jacq C."/>
            <person name="Jacquet M."/>
            <person name="James C.M."/>
            <person name="Jauniaux J.-C."/>
            <person name="Jia Y."/>
            <person name="Jimenez A."/>
            <person name="Kelly A."/>
            <person name="Kleinhans U."/>
            <person name="Kreisl P."/>
            <person name="Lanfranchi G."/>
            <person name="Lewis C."/>
            <person name="van der Linden C.G."/>
            <person name="Lucchini G."/>
            <person name="Lutzenkirchen K."/>
            <person name="Maat M.J."/>
            <person name="Mallet L."/>
            <person name="Mannhaupt G."/>
            <person name="Martegani E."/>
            <person name="Mathieu A."/>
            <person name="Maurer C.T.C."/>
            <person name="McConnell D."/>
            <person name="McKee R.A."/>
            <person name="Messenguy F."/>
            <person name="Mewes H.-W."/>
            <person name="Molemans F."/>
            <person name="Montague M.A."/>
            <person name="Muzi Falconi M."/>
            <person name="Navas L."/>
            <person name="Newlon C.S."/>
            <person name="Noone D."/>
            <person name="Pallier C."/>
            <person name="Panzeri L."/>
            <person name="Pearson B.M."/>
            <person name="Perea J."/>
            <person name="Philippsen P."/>
            <person name="Pierard A."/>
            <person name="Planta R.J."/>
            <person name="Plevani P."/>
            <person name="Poetsch B."/>
            <person name="Pohl F.M."/>
            <person name="Purnelle B."/>
            <person name="Ramezani Rad M."/>
            <person name="Rasmussen S.W."/>
            <person name="Raynal A."/>
            <person name="Remacha M.A."/>
            <person name="Richterich P."/>
            <person name="Roberts A.B."/>
            <person name="Rodriguez F."/>
            <person name="Sanz E."/>
            <person name="Schaaff-Gerstenschlaeger I."/>
            <person name="Scherens B."/>
            <person name="Schweitzer B."/>
            <person name="Shu Y."/>
            <person name="Skala J."/>
            <person name="Slonimski P.P."/>
            <person name="Sor F."/>
            <person name="Soustelle C."/>
            <person name="Spiegelberg R."/>
            <person name="Stateva L.I."/>
            <person name="Steensma H.Y."/>
            <person name="Steiner S."/>
            <person name="Thierry A."/>
            <person name="Thireos G."/>
            <person name="Tzermia M."/>
            <person name="Urrestarazu L.A."/>
            <person name="Valle G."/>
            <person name="Vetter I."/>
            <person name="van Vliet-Reedijk J.C."/>
            <person name="Voet M."/>
            <person name="Volckaert G."/>
            <person name="Vreken P."/>
            <person name="Wang H."/>
            <person name="Warmington J.R."/>
            <person name="von Wettstein D."/>
            <person name="Wicksteed B.L."/>
            <person name="Wilson C."/>
            <person name="Wurst H."/>
            <person name="Xu G."/>
            <person name="Yoshikawa A."/>
            <person name="Zimmermann F.K."/>
            <person name="Sgouros J.G."/>
        </authorList>
    </citation>
    <scope>NUCLEOTIDE SEQUENCE [LARGE SCALE GENOMIC DNA]</scope>
    <source>
        <strain>ATCC 204508 / S288c</strain>
    </source>
</reference>
<reference key="2">
    <citation type="journal article" date="2014" name="G3 (Bethesda)">
        <title>The reference genome sequence of Saccharomyces cerevisiae: Then and now.</title>
        <authorList>
            <person name="Engel S.R."/>
            <person name="Dietrich F.S."/>
            <person name="Fisk D.G."/>
            <person name="Binkley G."/>
            <person name="Balakrishnan R."/>
            <person name="Costanzo M.C."/>
            <person name="Dwight S.S."/>
            <person name="Hitz B.C."/>
            <person name="Karra K."/>
            <person name="Nash R.S."/>
            <person name="Weng S."/>
            <person name="Wong E.D."/>
            <person name="Lloyd P."/>
            <person name="Skrzypek M.S."/>
            <person name="Miyasato S.R."/>
            <person name="Simison M."/>
            <person name="Cherry J.M."/>
        </authorList>
    </citation>
    <scope>GENOME REANNOTATION</scope>
    <source>
        <strain>ATCC 204508 / S288c</strain>
    </source>
</reference>
<reference key="3">
    <citation type="journal article" date="2007" name="Genome Res.">
        <title>Approaching a complete repository of sequence-verified protein-encoding clones for Saccharomyces cerevisiae.</title>
        <authorList>
            <person name="Hu Y."/>
            <person name="Rolfs A."/>
            <person name="Bhullar B."/>
            <person name="Murthy T.V.S."/>
            <person name="Zhu C."/>
            <person name="Berger M.F."/>
            <person name="Camargo A.A."/>
            <person name="Kelley F."/>
            <person name="McCarron S."/>
            <person name="Jepson D."/>
            <person name="Richardson A."/>
            <person name="Raphael J."/>
            <person name="Moreira D."/>
            <person name="Taycher E."/>
            <person name="Zuo D."/>
            <person name="Mohr S."/>
            <person name="Kane M.F."/>
            <person name="Williamson J."/>
            <person name="Simpson A.J.G."/>
            <person name="Bulyk M.L."/>
            <person name="Harlow E."/>
            <person name="Marsischky G."/>
            <person name="Kolodner R.D."/>
            <person name="LaBaer J."/>
        </authorList>
    </citation>
    <scope>NUCLEOTIDE SEQUENCE [GENOMIC DNA]</scope>
    <source>
        <strain>ATCC 204508 / S288c</strain>
    </source>
</reference>
<accession>P25607</accession>
<accession>D6VRA2</accession>
<dbReference type="EMBL" id="X59720">
    <property type="protein sequence ID" value="CAA42243.1"/>
    <property type="molecule type" value="Genomic_DNA"/>
</dbReference>
<dbReference type="EMBL" id="AY692594">
    <property type="protein sequence ID" value="AAT92613.1"/>
    <property type="molecule type" value="Genomic_DNA"/>
</dbReference>
<dbReference type="EMBL" id="BK006937">
    <property type="protein sequence ID" value="DAA07571.1"/>
    <property type="molecule type" value="Genomic_DNA"/>
</dbReference>
<dbReference type="PIR" id="S19413">
    <property type="entry name" value="S19413"/>
</dbReference>
<dbReference type="RefSeq" id="NP_010025.1">
    <property type="nucleotide sequence ID" value="NM_001178808.1"/>
</dbReference>
<dbReference type="BioGRID" id="31074">
    <property type="interactions" value="26"/>
</dbReference>
<dbReference type="DIP" id="DIP-672N"/>
<dbReference type="FunCoup" id="P25607">
    <property type="interactions" value="33"/>
</dbReference>
<dbReference type="IntAct" id="P25607">
    <property type="interactions" value="1"/>
</dbReference>
<dbReference type="STRING" id="4932.YCR101C"/>
<dbReference type="PaxDb" id="4932-YCR101C"/>
<dbReference type="EnsemblFungi" id="YCR101C_mRNA">
    <property type="protein sequence ID" value="YCR101C"/>
    <property type="gene ID" value="YCR101C"/>
</dbReference>
<dbReference type="GeneID" id="850465"/>
<dbReference type="KEGG" id="sce:YCR101C"/>
<dbReference type="AGR" id="SGD:S000000698"/>
<dbReference type="SGD" id="S000000698">
    <property type="gene designation" value="YCR101C"/>
</dbReference>
<dbReference type="VEuPathDB" id="FungiDB:YCR101C"/>
<dbReference type="eggNOG" id="KOG3511">
    <property type="taxonomic scope" value="Eukaryota"/>
</dbReference>
<dbReference type="GeneTree" id="ENSGT00940000180970"/>
<dbReference type="HOGENOM" id="CLU_100717_0_0_1"/>
<dbReference type="InParanoid" id="P25607"/>
<dbReference type="OMA" id="KLNLPWK"/>
<dbReference type="OrthoDB" id="4037079at2759"/>
<dbReference type="BioCyc" id="YEAST:G3O-29395-MONOMER"/>
<dbReference type="BioGRID-ORCS" id="850465">
    <property type="hits" value="0 hits in 10 CRISPR screens"/>
</dbReference>
<dbReference type="PRO" id="PR:P25607"/>
<dbReference type="Proteomes" id="UP000002311">
    <property type="component" value="Chromosome III"/>
</dbReference>
<dbReference type="RNAct" id="P25607">
    <property type="molecule type" value="protein"/>
</dbReference>
<dbReference type="GO" id="GO:0000324">
    <property type="term" value="C:fungal-type vacuole"/>
    <property type="evidence" value="ECO:0007005"/>
    <property type="project" value="SGD"/>
</dbReference>
<dbReference type="GO" id="GO:0016020">
    <property type="term" value="C:membrane"/>
    <property type="evidence" value="ECO:0000314"/>
    <property type="project" value="SGD"/>
</dbReference>
<dbReference type="Gene3D" id="2.130.10.10">
    <property type="entry name" value="YVTN repeat-like/Quinoprotein amine dehydrogenase"/>
    <property type="match status" value="1"/>
</dbReference>
<dbReference type="InterPro" id="IPR031778">
    <property type="entry name" value="Sortilin_N"/>
</dbReference>
<dbReference type="InterPro" id="IPR015943">
    <property type="entry name" value="WD40/YVTN_repeat-like_dom_sf"/>
</dbReference>
<dbReference type="Pfam" id="PF15902">
    <property type="entry name" value="Sortilin-Vps10"/>
    <property type="match status" value="1"/>
</dbReference>
<dbReference type="SUPFAM" id="SSF110296">
    <property type="entry name" value="Oligoxyloglucan reducing end-specific cellobiohydrolase"/>
    <property type="match status" value="1"/>
</dbReference>
<proteinExistence type="predicted"/>
<name>YCZ1_YEAST</name>